<keyword id="KW-0963">Cytoplasm</keyword>
<keyword id="KW-0501">Molybdenum cofactor biosynthesis</keyword>
<keyword id="KW-1185">Reference proteome</keyword>
<organism>
    <name type="scientific">Cronobacter sakazakii (strain ATCC BAA-894)</name>
    <name type="common">Enterobacter sakazakii</name>
    <dbReference type="NCBI Taxonomy" id="290339"/>
    <lineage>
        <taxon>Bacteria</taxon>
        <taxon>Pseudomonadati</taxon>
        <taxon>Pseudomonadota</taxon>
        <taxon>Gammaproteobacteria</taxon>
        <taxon>Enterobacterales</taxon>
        <taxon>Enterobacteriaceae</taxon>
        <taxon>Cronobacter</taxon>
    </lineage>
</organism>
<evidence type="ECO:0000255" key="1">
    <source>
        <dbReference type="HAMAP-Rule" id="MF_00187"/>
    </source>
</evidence>
<name>FDHD_CROS8</name>
<protein>
    <recommendedName>
        <fullName evidence="1">Sulfur carrier protein FdhD</fullName>
    </recommendedName>
</protein>
<feature type="chain" id="PRO_1000020816" description="Sulfur carrier protein FdhD">
    <location>
        <begin position="1"/>
        <end position="280"/>
    </location>
</feature>
<feature type="active site" description="Cysteine persulfide intermediate" evidence="1">
    <location>
        <position position="121"/>
    </location>
</feature>
<feature type="binding site" evidence="1">
    <location>
        <begin position="258"/>
        <end position="263"/>
    </location>
    <ligand>
        <name>Mo-bis(molybdopterin guanine dinucleotide)</name>
        <dbReference type="ChEBI" id="CHEBI:60539"/>
    </ligand>
</feature>
<reference key="1">
    <citation type="journal article" date="2010" name="PLoS ONE">
        <title>Genome sequence of Cronobacter sakazakii BAA-894 and comparative genomic hybridization analysis with other Cronobacter species.</title>
        <authorList>
            <person name="Kucerova E."/>
            <person name="Clifton S.W."/>
            <person name="Xia X.Q."/>
            <person name="Long F."/>
            <person name="Porwollik S."/>
            <person name="Fulton L."/>
            <person name="Fronick C."/>
            <person name="Minx P."/>
            <person name="Kyung K."/>
            <person name="Warren W."/>
            <person name="Fulton R."/>
            <person name="Feng D."/>
            <person name="Wollam A."/>
            <person name="Shah N."/>
            <person name="Bhonagiri V."/>
            <person name="Nash W.E."/>
            <person name="Hallsworth-Pepin K."/>
            <person name="Wilson R.K."/>
            <person name="McClelland M."/>
            <person name="Forsythe S.J."/>
        </authorList>
    </citation>
    <scope>NUCLEOTIDE SEQUENCE [LARGE SCALE GENOMIC DNA]</scope>
    <source>
        <strain>ATCC BAA-894</strain>
    </source>
</reference>
<dbReference type="EMBL" id="CP000783">
    <property type="protein sequence ID" value="ABU79046.1"/>
    <property type="molecule type" value="Genomic_DNA"/>
</dbReference>
<dbReference type="RefSeq" id="WP_012126102.1">
    <property type="nucleotide sequence ID" value="NC_009778.1"/>
</dbReference>
<dbReference type="SMR" id="A7ML56"/>
<dbReference type="KEGG" id="esa:ESA_03860"/>
<dbReference type="PATRIC" id="fig|290339.8.peg.3432"/>
<dbReference type="HOGENOM" id="CLU_056887_2_0_6"/>
<dbReference type="Proteomes" id="UP000000260">
    <property type="component" value="Chromosome"/>
</dbReference>
<dbReference type="GO" id="GO:0005737">
    <property type="term" value="C:cytoplasm"/>
    <property type="evidence" value="ECO:0007669"/>
    <property type="project" value="UniProtKB-SubCell"/>
</dbReference>
<dbReference type="GO" id="GO:0097163">
    <property type="term" value="F:sulfur carrier activity"/>
    <property type="evidence" value="ECO:0007669"/>
    <property type="project" value="UniProtKB-UniRule"/>
</dbReference>
<dbReference type="GO" id="GO:0016783">
    <property type="term" value="F:sulfurtransferase activity"/>
    <property type="evidence" value="ECO:0007669"/>
    <property type="project" value="InterPro"/>
</dbReference>
<dbReference type="GO" id="GO:0006777">
    <property type="term" value="P:Mo-molybdopterin cofactor biosynthetic process"/>
    <property type="evidence" value="ECO:0007669"/>
    <property type="project" value="UniProtKB-UniRule"/>
</dbReference>
<dbReference type="Gene3D" id="3.10.20.10">
    <property type="match status" value="1"/>
</dbReference>
<dbReference type="Gene3D" id="3.40.140.10">
    <property type="entry name" value="Cytidine Deaminase, domain 2"/>
    <property type="match status" value="1"/>
</dbReference>
<dbReference type="HAMAP" id="MF_00187">
    <property type="entry name" value="FdhD"/>
    <property type="match status" value="1"/>
</dbReference>
<dbReference type="InterPro" id="IPR016193">
    <property type="entry name" value="Cytidine_deaminase-like"/>
</dbReference>
<dbReference type="InterPro" id="IPR003786">
    <property type="entry name" value="FdhD"/>
</dbReference>
<dbReference type="NCBIfam" id="TIGR00129">
    <property type="entry name" value="fdhD_narQ"/>
    <property type="match status" value="1"/>
</dbReference>
<dbReference type="PANTHER" id="PTHR30592">
    <property type="entry name" value="FORMATE DEHYDROGENASE"/>
    <property type="match status" value="1"/>
</dbReference>
<dbReference type="PANTHER" id="PTHR30592:SF1">
    <property type="entry name" value="SULFUR CARRIER PROTEIN FDHD"/>
    <property type="match status" value="1"/>
</dbReference>
<dbReference type="Pfam" id="PF02634">
    <property type="entry name" value="FdhD-NarQ"/>
    <property type="match status" value="1"/>
</dbReference>
<dbReference type="PIRSF" id="PIRSF015626">
    <property type="entry name" value="FdhD"/>
    <property type="match status" value="1"/>
</dbReference>
<dbReference type="SUPFAM" id="SSF53927">
    <property type="entry name" value="Cytidine deaminase-like"/>
    <property type="match status" value="1"/>
</dbReference>
<proteinExistence type="inferred from homology"/>
<comment type="function">
    <text evidence="1">Required for formate dehydrogenase (FDH) activity. Acts as a sulfur carrier protein that transfers sulfur from IscS to the molybdenum cofactor prior to its insertion into FDH.</text>
</comment>
<comment type="subcellular location">
    <subcellularLocation>
        <location evidence="1">Cytoplasm</location>
    </subcellularLocation>
</comment>
<comment type="similarity">
    <text evidence="1">Belongs to the FdhD family.</text>
</comment>
<gene>
    <name evidence="1" type="primary">fdhD</name>
    <name type="ordered locus">ESA_03860</name>
</gene>
<accession>A7ML56</accession>
<sequence>MNKNHPELLQNVTDVTAARSLPLWKRENLTTTEPDWLAEEVPVALVYNGISHVVMMASPKDLEIFALGFSLSEGIVESSHEIYGMDIIHGCNGIEIQVELSSRRFTELKARRRNLAGRTGCGVCGVEQLNDIVRPLAPLPFTQTFSLDNLDGALRQLASVQPVGELTGCTHAAAWLTPQGDIAGGHEDVGRHVALDKLLGRRAREAWQQGAVLVSSRASYEMVQKAATCGVEILFAVSAATTLAVEVAERCNLTLVGFSRPGRATIYTHPQRLIAGDKNA</sequence>